<proteinExistence type="inferred from homology"/>
<gene>
    <name evidence="1" type="primary">metN2</name>
    <name type="ordered locus">BT9727_4696</name>
</gene>
<sequence length="341" mass="37812">MILLENVKKIYKAKSGDVTAVDNANLKIDKGEIFGVIGYSGAGKSSLIRLFNQLEKPTSGQITIANRVISAITGSELRKARQEIGMIFQHFNLLWSRTVRENIEFPLEIAGVDKAARRKRVDELIHLVGLEGRGDAYPSQLSGGQKQRVGIARALANNPQVLLCDEATSALDPETTDQILDLLLDINKRLGLTIVLITHEMHVIRKICNRVAVMEKGKIVETGPVLDVFRNPQQDITKRFVQQLTDSEDTNETIESLIEKYPDGKVVRLQFIGEAVERPVLQRLMQRSDIEVSILQGNIAQTNNGSYGSLVVHLNGEETAIQQAIEGIHQDQVELEVIAHG</sequence>
<reference key="1">
    <citation type="journal article" date="2006" name="J. Bacteriol.">
        <title>Pathogenomic sequence analysis of Bacillus cereus and Bacillus thuringiensis isolates closely related to Bacillus anthracis.</title>
        <authorList>
            <person name="Han C.S."/>
            <person name="Xie G."/>
            <person name="Challacombe J.F."/>
            <person name="Altherr M.R."/>
            <person name="Bhotika S.S."/>
            <person name="Bruce D."/>
            <person name="Campbell C.S."/>
            <person name="Campbell M.L."/>
            <person name="Chen J."/>
            <person name="Chertkov O."/>
            <person name="Cleland C."/>
            <person name="Dimitrijevic M."/>
            <person name="Doggett N.A."/>
            <person name="Fawcett J.J."/>
            <person name="Glavina T."/>
            <person name="Goodwin L.A."/>
            <person name="Hill K.K."/>
            <person name="Hitchcock P."/>
            <person name="Jackson P.J."/>
            <person name="Keim P."/>
            <person name="Kewalramani A.R."/>
            <person name="Longmire J."/>
            <person name="Lucas S."/>
            <person name="Malfatti S."/>
            <person name="McMurry K."/>
            <person name="Meincke L.J."/>
            <person name="Misra M."/>
            <person name="Moseman B.L."/>
            <person name="Mundt M."/>
            <person name="Munk A.C."/>
            <person name="Okinaka R.T."/>
            <person name="Parson-Quintana B."/>
            <person name="Reilly L.P."/>
            <person name="Richardson P."/>
            <person name="Robinson D.L."/>
            <person name="Rubin E."/>
            <person name="Saunders E."/>
            <person name="Tapia R."/>
            <person name="Tesmer J.G."/>
            <person name="Thayer N."/>
            <person name="Thompson L.S."/>
            <person name="Tice H."/>
            <person name="Ticknor L.O."/>
            <person name="Wills P.L."/>
            <person name="Brettin T.S."/>
            <person name="Gilna P."/>
        </authorList>
    </citation>
    <scope>NUCLEOTIDE SEQUENCE [LARGE SCALE GENOMIC DNA]</scope>
    <source>
        <strain>97-27</strain>
    </source>
</reference>
<dbReference type="EC" id="7.4.2.11" evidence="1"/>
<dbReference type="EMBL" id="AE017355">
    <property type="protein sequence ID" value="AAT63246.1"/>
    <property type="molecule type" value="Genomic_DNA"/>
</dbReference>
<dbReference type="RefSeq" id="WP_000601752.1">
    <property type="nucleotide sequence ID" value="NC_005957.1"/>
</dbReference>
<dbReference type="RefSeq" id="YP_039006.1">
    <property type="nucleotide sequence ID" value="NC_005957.1"/>
</dbReference>
<dbReference type="SMR" id="Q6HBS0"/>
<dbReference type="KEGG" id="btk:BT9727_4696"/>
<dbReference type="PATRIC" id="fig|281309.8.peg.4994"/>
<dbReference type="HOGENOM" id="CLU_000604_1_3_9"/>
<dbReference type="Proteomes" id="UP000001301">
    <property type="component" value="Chromosome"/>
</dbReference>
<dbReference type="GO" id="GO:0005886">
    <property type="term" value="C:plasma membrane"/>
    <property type="evidence" value="ECO:0007669"/>
    <property type="project" value="UniProtKB-SubCell"/>
</dbReference>
<dbReference type="GO" id="GO:0033232">
    <property type="term" value="F:ABC-type D-methionine transporter activity"/>
    <property type="evidence" value="ECO:0007669"/>
    <property type="project" value="UniProtKB-EC"/>
</dbReference>
<dbReference type="GO" id="GO:0005524">
    <property type="term" value="F:ATP binding"/>
    <property type="evidence" value="ECO:0007669"/>
    <property type="project" value="UniProtKB-KW"/>
</dbReference>
<dbReference type="GO" id="GO:0016887">
    <property type="term" value="F:ATP hydrolysis activity"/>
    <property type="evidence" value="ECO:0007669"/>
    <property type="project" value="InterPro"/>
</dbReference>
<dbReference type="CDD" id="cd03258">
    <property type="entry name" value="ABC_MetN_methionine_transporter"/>
    <property type="match status" value="1"/>
</dbReference>
<dbReference type="FunFam" id="3.30.70.260:FF:000057">
    <property type="entry name" value="Methionine import ATP-binding protein MetN"/>
    <property type="match status" value="1"/>
</dbReference>
<dbReference type="FunFam" id="3.40.50.300:FF:000233">
    <property type="entry name" value="Methionine import ATP-binding protein MetN"/>
    <property type="match status" value="1"/>
</dbReference>
<dbReference type="Gene3D" id="3.30.70.260">
    <property type="match status" value="1"/>
</dbReference>
<dbReference type="Gene3D" id="3.40.50.300">
    <property type="entry name" value="P-loop containing nucleotide triphosphate hydrolases"/>
    <property type="match status" value="1"/>
</dbReference>
<dbReference type="InterPro" id="IPR003593">
    <property type="entry name" value="AAA+_ATPase"/>
</dbReference>
<dbReference type="InterPro" id="IPR003439">
    <property type="entry name" value="ABC_transporter-like_ATP-bd"/>
</dbReference>
<dbReference type="InterPro" id="IPR017871">
    <property type="entry name" value="ABC_transporter-like_CS"/>
</dbReference>
<dbReference type="InterPro" id="IPR045865">
    <property type="entry name" value="ACT-like_dom_sf"/>
</dbReference>
<dbReference type="InterPro" id="IPR041701">
    <property type="entry name" value="MetN_ABC"/>
</dbReference>
<dbReference type="InterPro" id="IPR050086">
    <property type="entry name" value="MetN_ABC_transporter-like"/>
</dbReference>
<dbReference type="InterPro" id="IPR018449">
    <property type="entry name" value="NIL_domain"/>
</dbReference>
<dbReference type="InterPro" id="IPR027417">
    <property type="entry name" value="P-loop_NTPase"/>
</dbReference>
<dbReference type="PANTHER" id="PTHR43166">
    <property type="entry name" value="AMINO ACID IMPORT ATP-BINDING PROTEIN"/>
    <property type="match status" value="1"/>
</dbReference>
<dbReference type="PANTHER" id="PTHR43166:SF36">
    <property type="entry name" value="METHIONINE IMPORT ATP-BINDING PROTEIN METN 2"/>
    <property type="match status" value="1"/>
</dbReference>
<dbReference type="Pfam" id="PF00005">
    <property type="entry name" value="ABC_tran"/>
    <property type="match status" value="1"/>
</dbReference>
<dbReference type="Pfam" id="PF09383">
    <property type="entry name" value="NIL"/>
    <property type="match status" value="1"/>
</dbReference>
<dbReference type="SMART" id="SM00382">
    <property type="entry name" value="AAA"/>
    <property type="match status" value="1"/>
</dbReference>
<dbReference type="SMART" id="SM00930">
    <property type="entry name" value="NIL"/>
    <property type="match status" value="1"/>
</dbReference>
<dbReference type="SUPFAM" id="SSF55021">
    <property type="entry name" value="ACT-like"/>
    <property type="match status" value="1"/>
</dbReference>
<dbReference type="SUPFAM" id="SSF52540">
    <property type="entry name" value="P-loop containing nucleoside triphosphate hydrolases"/>
    <property type="match status" value="1"/>
</dbReference>
<dbReference type="PROSITE" id="PS00211">
    <property type="entry name" value="ABC_TRANSPORTER_1"/>
    <property type="match status" value="1"/>
</dbReference>
<dbReference type="PROSITE" id="PS50893">
    <property type="entry name" value="ABC_TRANSPORTER_2"/>
    <property type="match status" value="1"/>
</dbReference>
<dbReference type="PROSITE" id="PS51264">
    <property type="entry name" value="METN"/>
    <property type="match status" value="1"/>
</dbReference>
<evidence type="ECO:0000255" key="1">
    <source>
        <dbReference type="HAMAP-Rule" id="MF_01719"/>
    </source>
</evidence>
<organism>
    <name type="scientific">Bacillus thuringiensis subsp. konkukian (strain 97-27)</name>
    <dbReference type="NCBI Taxonomy" id="281309"/>
    <lineage>
        <taxon>Bacteria</taxon>
        <taxon>Bacillati</taxon>
        <taxon>Bacillota</taxon>
        <taxon>Bacilli</taxon>
        <taxon>Bacillales</taxon>
        <taxon>Bacillaceae</taxon>
        <taxon>Bacillus</taxon>
        <taxon>Bacillus cereus group</taxon>
    </lineage>
</organism>
<comment type="function">
    <text evidence="1">Part of the ABC transporter complex MetNIQ involved in methionine import. Responsible for energy coupling to the transport system.</text>
</comment>
<comment type="catalytic activity">
    <reaction evidence="1">
        <text>L-methionine(out) + ATP + H2O = L-methionine(in) + ADP + phosphate + H(+)</text>
        <dbReference type="Rhea" id="RHEA:29779"/>
        <dbReference type="ChEBI" id="CHEBI:15377"/>
        <dbReference type="ChEBI" id="CHEBI:15378"/>
        <dbReference type="ChEBI" id="CHEBI:30616"/>
        <dbReference type="ChEBI" id="CHEBI:43474"/>
        <dbReference type="ChEBI" id="CHEBI:57844"/>
        <dbReference type="ChEBI" id="CHEBI:456216"/>
        <dbReference type="EC" id="7.4.2.11"/>
    </reaction>
</comment>
<comment type="catalytic activity">
    <reaction evidence="1">
        <text>D-methionine(out) + ATP + H2O = D-methionine(in) + ADP + phosphate + H(+)</text>
        <dbReference type="Rhea" id="RHEA:29767"/>
        <dbReference type="ChEBI" id="CHEBI:15377"/>
        <dbReference type="ChEBI" id="CHEBI:15378"/>
        <dbReference type="ChEBI" id="CHEBI:30616"/>
        <dbReference type="ChEBI" id="CHEBI:43474"/>
        <dbReference type="ChEBI" id="CHEBI:57932"/>
        <dbReference type="ChEBI" id="CHEBI:456216"/>
        <dbReference type="EC" id="7.4.2.11"/>
    </reaction>
</comment>
<comment type="subunit">
    <text evidence="1">The complex is composed of two ATP-binding proteins (MetN), two transmembrane proteins (MetI) and a solute-binding protein (MetQ).</text>
</comment>
<comment type="subcellular location">
    <subcellularLocation>
        <location evidence="1">Cell membrane</location>
        <topology evidence="1">Peripheral membrane protein</topology>
    </subcellularLocation>
</comment>
<comment type="similarity">
    <text evidence="1">Belongs to the ABC transporter superfamily. Methionine importer (TC 3.A.1.24) family.</text>
</comment>
<accession>Q6HBS0</accession>
<protein>
    <recommendedName>
        <fullName evidence="1">Methionine import ATP-binding protein MetN 2</fullName>
        <ecNumber evidence="1">7.4.2.11</ecNumber>
    </recommendedName>
</protein>
<keyword id="KW-0029">Amino-acid transport</keyword>
<keyword id="KW-0067">ATP-binding</keyword>
<keyword id="KW-1003">Cell membrane</keyword>
<keyword id="KW-0472">Membrane</keyword>
<keyword id="KW-0547">Nucleotide-binding</keyword>
<keyword id="KW-1278">Translocase</keyword>
<keyword id="KW-0813">Transport</keyword>
<feature type="chain" id="PRO_0000270249" description="Methionine import ATP-binding protein MetN 2">
    <location>
        <begin position="1"/>
        <end position="341"/>
    </location>
</feature>
<feature type="domain" description="ABC transporter" evidence="1">
    <location>
        <begin position="2"/>
        <end position="241"/>
    </location>
</feature>
<feature type="binding site" evidence="1">
    <location>
        <begin position="38"/>
        <end position="45"/>
    </location>
    <ligand>
        <name>ATP</name>
        <dbReference type="ChEBI" id="CHEBI:30616"/>
    </ligand>
</feature>
<name>METN2_BACHK</name>